<reference key="1">
    <citation type="journal article" date="2005" name="Nat. Biotechnol.">
        <title>Genome sequence of the chlorinated compound-respiring bacterium Dehalococcoides species strain CBDB1.</title>
        <authorList>
            <person name="Kube M."/>
            <person name="Beck A."/>
            <person name="Zinder S.H."/>
            <person name="Kuhl H."/>
            <person name="Reinhardt R."/>
            <person name="Adrian L."/>
        </authorList>
    </citation>
    <scope>NUCLEOTIDE SEQUENCE [LARGE SCALE GENOMIC DNA]</scope>
    <source>
        <strain>CBDB1</strain>
    </source>
</reference>
<sequence length="880" mass="100189">MAQCSDLPEMAKAYEAAEVEKKWYQYWMEKSYFKPNPNSDKKPFVIIMPPPNVTGELHLGHALTATLEDIMIRWHRMQGEPTLWLPGVDHAGIAAQVVVERELAKQGKTRQQLGRELFLEKMWEWVNPCREKIRHQHMRLGASCDWDRETFTLDAGPVKAVREIFTNLYEKGLIYKGERIINWCPRCGTAVSDLEVDHKDLAGHIWHLRYPLEDGSGFVTVATTRPETMQGDTAVAIHPDDTRYAGMVGKNVVLPIMNRRIPVIADEAVDMAFGTGAVKVTPAHDPNDFEMGLRHNLPMITIQNRDTTMNENAGPCSGMTAKACREYVVSEMKSLGLLLRIEDYIHSVGHCQRCSAVIEPMVSKQWFVKMEPLAKPALEAVNSGRIQILPERFNKVYQNWMENIRDWCISRQLWWGHRIPVWYCPCGEMIVAKVDPTVCPKCGGTELEQDPDVLDTWFSSGLWPHSTLGWPDQTEDLKRFYPGTVMETAYDIIFFWVARMIVMGMEDMNEVPFRTVYLHGLIRDDKGEKMSKTKGNVIDPLKVIDQYGTDALRFAVTFGTSPGNDSKLGQTKLEAARNFANKLWNASRFVIMNLGEAKELTPEAELPLEDRWIISRMNRVTADVTRLMEEFQFGEAQRVLQDFIWGEFCDWYIELAKVRLRDEASVSPRPVLVRVLSSILRLLHPYMPFITEELWSYLRPYLPESLRETDIIVAPYPAADKTCFDEQAESVMGSLVEIVRSLRNLRAEHNVEISRYIQANIYAGDMASVLGNYLGAVETLSRARPVNILPGHYSGASTATEVVLVLTGIEVVVPMSTMVDLEVEAKRVKAEISELEIQIERLSTRLSDEQFLAKAPQAVVDKERIKLEGYIEKVSRLKSA</sequence>
<protein>
    <recommendedName>
        <fullName evidence="1">Valine--tRNA ligase</fullName>
        <ecNumber evidence="1">6.1.1.9</ecNumber>
    </recommendedName>
    <alternativeName>
        <fullName evidence="1">Valyl-tRNA synthetase</fullName>
        <shortName evidence="1">ValRS</shortName>
    </alternativeName>
</protein>
<feature type="chain" id="PRO_0000224472" description="Valine--tRNA ligase">
    <location>
        <begin position="1"/>
        <end position="880"/>
    </location>
</feature>
<feature type="coiled-coil region" evidence="1">
    <location>
        <begin position="815"/>
        <end position="854"/>
    </location>
</feature>
<feature type="short sequence motif" description="'HIGH' region">
    <location>
        <begin position="51"/>
        <end position="61"/>
    </location>
</feature>
<feature type="short sequence motif" description="'KMSKS' region">
    <location>
        <begin position="529"/>
        <end position="533"/>
    </location>
</feature>
<feature type="binding site" evidence="1">
    <location>
        <position position="532"/>
    </location>
    <ligand>
        <name>ATP</name>
        <dbReference type="ChEBI" id="CHEBI:30616"/>
    </ligand>
</feature>
<accession>Q3ZZG9</accession>
<organism>
    <name type="scientific">Dehalococcoides mccartyi (strain CBDB1)</name>
    <dbReference type="NCBI Taxonomy" id="255470"/>
    <lineage>
        <taxon>Bacteria</taxon>
        <taxon>Bacillati</taxon>
        <taxon>Chloroflexota</taxon>
        <taxon>Dehalococcoidia</taxon>
        <taxon>Dehalococcoidales</taxon>
        <taxon>Dehalococcoidaceae</taxon>
        <taxon>Dehalococcoides</taxon>
    </lineage>
</organism>
<name>SYV_DEHMC</name>
<evidence type="ECO:0000255" key="1">
    <source>
        <dbReference type="HAMAP-Rule" id="MF_02004"/>
    </source>
</evidence>
<gene>
    <name evidence="1" type="primary">valS</name>
    <name type="ordered locus">cbdbA384</name>
</gene>
<dbReference type="EC" id="6.1.1.9" evidence="1"/>
<dbReference type="EMBL" id="AJ965256">
    <property type="protein sequence ID" value="CAI82595.1"/>
    <property type="molecule type" value="Genomic_DNA"/>
</dbReference>
<dbReference type="RefSeq" id="WP_011308952.1">
    <property type="nucleotide sequence ID" value="NC_007356.1"/>
</dbReference>
<dbReference type="SMR" id="Q3ZZG9"/>
<dbReference type="KEGG" id="deh:cbdbA384"/>
<dbReference type="HOGENOM" id="CLU_001493_0_2_0"/>
<dbReference type="Proteomes" id="UP000000433">
    <property type="component" value="Chromosome"/>
</dbReference>
<dbReference type="GO" id="GO:0005829">
    <property type="term" value="C:cytosol"/>
    <property type="evidence" value="ECO:0007669"/>
    <property type="project" value="TreeGrafter"/>
</dbReference>
<dbReference type="GO" id="GO:0002161">
    <property type="term" value="F:aminoacyl-tRNA deacylase activity"/>
    <property type="evidence" value="ECO:0007669"/>
    <property type="project" value="InterPro"/>
</dbReference>
<dbReference type="GO" id="GO:0005524">
    <property type="term" value="F:ATP binding"/>
    <property type="evidence" value="ECO:0007669"/>
    <property type="project" value="UniProtKB-UniRule"/>
</dbReference>
<dbReference type="GO" id="GO:0004832">
    <property type="term" value="F:valine-tRNA ligase activity"/>
    <property type="evidence" value="ECO:0007669"/>
    <property type="project" value="UniProtKB-UniRule"/>
</dbReference>
<dbReference type="GO" id="GO:0006438">
    <property type="term" value="P:valyl-tRNA aminoacylation"/>
    <property type="evidence" value="ECO:0007669"/>
    <property type="project" value="UniProtKB-UniRule"/>
</dbReference>
<dbReference type="CDD" id="cd07962">
    <property type="entry name" value="Anticodon_Ia_Val"/>
    <property type="match status" value="1"/>
</dbReference>
<dbReference type="CDD" id="cd00817">
    <property type="entry name" value="ValRS_core"/>
    <property type="match status" value="1"/>
</dbReference>
<dbReference type="FunFam" id="1.10.730.10:FF:000014">
    <property type="entry name" value="Valine--tRNA ligase"/>
    <property type="match status" value="1"/>
</dbReference>
<dbReference type="FunFam" id="3.40.50.620:FF:000032">
    <property type="entry name" value="Valine--tRNA ligase"/>
    <property type="match status" value="1"/>
</dbReference>
<dbReference type="FunFam" id="3.40.50.620:FF:000098">
    <property type="entry name" value="Valine--tRNA ligase"/>
    <property type="match status" value="1"/>
</dbReference>
<dbReference type="Gene3D" id="3.40.50.620">
    <property type="entry name" value="HUPs"/>
    <property type="match status" value="2"/>
</dbReference>
<dbReference type="Gene3D" id="1.10.730.10">
    <property type="entry name" value="Isoleucyl-tRNA Synthetase, Domain 1"/>
    <property type="match status" value="1"/>
</dbReference>
<dbReference type="Gene3D" id="1.10.287.380">
    <property type="entry name" value="Valyl-tRNA synthetase, C-terminal domain"/>
    <property type="match status" value="1"/>
</dbReference>
<dbReference type="HAMAP" id="MF_02004">
    <property type="entry name" value="Val_tRNA_synth_type1"/>
    <property type="match status" value="1"/>
</dbReference>
<dbReference type="InterPro" id="IPR001412">
    <property type="entry name" value="aa-tRNA-synth_I_CS"/>
</dbReference>
<dbReference type="InterPro" id="IPR002300">
    <property type="entry name" value="aa-tRNA-synth_Ia"/>
</dbReference>
<dbReference type="InterPro" id="IPR033705">
    <property type="entry name" value="Anticodon_Ia_Val"/>
</dbReference>
<dbReference type="InterPro" id="IPR013155">
    <property type="entry name" value="M/V/L/I-tRNA-synth_anticd-bd"/>
</dbReference>
<dbReference type="InterPro" id="IPR014729">
    <property type="entry name" value="Rossmann-like_a/b/a_fold"/>
</dbReference>
<dbReference type="InterPro" id="IPR010978">
    <property type="entry name" value="tRNA-bd_arm"/>
</dbReference>
<dbReference type="InterPro" id="IPR009080">
    <property type="entry name" value="tRNAsynth_Ia_anticodon-bd"/>
</dbReference>
<dbReference type="InterPro" id="IPR037118">
    <property type="entry name" value="Val-tRNA_synth_C_sf"/>
</dbReference>
<dbReference type="InterPro" id="IPR019499">
    <property type="entry name" value="Val-tRNA_synth_tRNA-bd"/>
</dbReference>
<dbReference type="InterPro" id="IPR009008">
    <property type="entry name" value="Val/Leu/Ile-tRNA-synth_edit"/>
</dbReference>
<dbReference type="InterPro" id="IPR002303">
    <property type="entry name" value="Valyl-tRNA_ligase"/>
</dbReference>
<dbReference type="NCBIfam" id="NF004349">
    <property type="entry name" value="PRK05729.1"/>
    <property type="match status" value="1"/>
</dbReference>
<dbReference type="NCBIfam" id="TIGR00422">
    <property type="entry name" value="valS"/>
    <property type="match status" value="1"/>
</dbReference>
<dbReference type="PANTHER" id="PTHR11946:SF93">
    <property type="entry name" value="VALINE--TRNA LIGASE, CHLOROPLASTIC_MITOCHONDRIAL 2"/>
    <property type="match status" value="1"/>
</dbReference>
<dbReference type="PANTHER" id="PTHR11946">
    <property type="entry name" value="VALYL-TRNA SYNTHETASES"/>
    <property type="match status" value="1"/>
</dbReference>
<dbReference type="Pfam" id="PF08264">
    <property type="entry name" value="Anticodon_1"/>
    <property type="match status" value="1"/>
</dbReference>
<dbReference type="Pfam" id="PF00133">
    <property type="entry name" value="tRNA-synt_1"/>
    <property type="match status" value="1"/>
</dbReference>
<dbReference type="Pfam" id="PF10458">
    <property type="entry name" value="Val_tRNA-synt_C"/>
    <property type="match status" value="1"/>
</dbReference>
<dbReference type="PRINTS" id="PR00986">
    <property type="entry name" value="TRNASYNTHVAL"/>
</dbReference>
<dbReference type="SUPFAM" id="SSF47323">
    <property type="entry name" value="Anticodon-binding domain of a subclass of class I aminoacyl-tRNA synthetases"/>
    <property type="match status" value="1"/>
</dbReference>
<dbReference type="SUPFAM" id="SSF52374">
    <property type="entry name" value="Nucleotidylyl transferase"/>
    <property type="match status" value="1"/>
</dbReference>
<dbReference type="SUPFAM" id="SSF46589">
    <property type="entry name" value="tRNA-binding arm"/>
    <property type="match status" value="1"/>
</dbReference>
<dbReference type="SUPFAM" id="SSF50677">
    <property type="entry name" value="ValRS/IleRS/LeuRS editing domain"/>
    <property type="match status" value="1"/>
</dbReference>
<dbReference type="PROSITE" id="PS00178">
    <property type="entry name" value="AA_TRNA_LIGASE_I"/>
    <property type="match status" value="1"/>
</dbReference>
<keyword id="KW-0030">Aminoacyl-tRNA synthetase</keyword>
<keyword id="KW-0067">ATP-binding</keyword>
<keyword id="KW-0175">Coiled coil</keyword>
<keyword id="KW-0963">Cytoplasm</keyword>
<keyword id="KW-0436">Ligase</keyword>
<keyword id="KW-0547">Nucleotide-binding</keyword>
<keyword id="KW-0648">Protein biosynthesis</keyword>
<proteinExistence type="inferred from homology"/>
<comment type="function">
    <text evidence="1">Catalyzes the attachment of valine to tRNA(Val). As ValRS can inadvertently accommodate and process structurally similar amino acids such as threonine, to avoid such errors, it has a 'posttransfer' editing activity that hydrolyzes mischarged Thr-tRNA(Val) in a tRNA-dependent manner.</text>
</comment>
<comment type="catalytic activity">
    <reaction evidence="1">
        <text>tRNA(Val) + L-valine + ATP = L-valyl-tRNA(Val) + AMP + diphosphate</text>
        <dbReference type="Rhea" id="RHEA:10704"/>
        <dbReference type="Rhea" id="RHEA-COMP:9672"/>
        <dbReference type="Rhea" id="RHEA-COMP:9708"/>
        <dbReference type="ChEBI" id="CHEBI:30616"/>
        <dbReference type="ChEBI" id="CHEBI:33019"/>
        <dbReference type="ChEBI" id="CHEBI:57762"/>
        <dbReference type="ChEBI" id="CHEBI:78442"/>
        <dbReference type="ChEBI" id="CHEBI:78537"/>
        <dbReference type="ChEBI" id="CHEBI:456215"/>
        <dbReference type="EC" id="6.1.1.9"/>
    </reaction>
</comment>
<comment type="subunit">
    <text evidence="1">Monomer.</text>
</comment>
<comment type="subcellular location">
    <subcellularLocation>
        <location evidence="1">Cytoplasm</location>
    </subcellularLocation>
</comment>
<comment type="domain">
    <text evidence="1">ValRS has two distinct active sites: one for aminoacylation and one for editing. The misactivated threonine is translocated from the active site to the editing site.</text>
</comment>
<comment type="domain">
    <text evidence="1">The C-terminal coiled-coil domain is crucial for aminoacylation activity.</text>
</comment>
<comment type="similarity">
    <text evidence="1">Belongs to the class-I aminoacyl-tRNA synthetase family. ValS type 1 subfamily.</text>
</comment>